<sequence>MGTRRDVRFVSSGVKLPCADAAPAPAPAPTLLSAALPFARIGRAIDGVVRHVARSLPRLPVARAETGAGAAAAPIALPRRQKDGGGGGGGEERVLISEVAVRGKDGEPLERPELEAAAAAALRACRPNAALTVREVQEDVHRVVESGLFRSCMPVAVDTRDGIRLVFEVEPNQDFHGLVCEGANMLPSKFLEDAFHDRHGKIINIRHLDQVIKSVNGWYQERGLTGLVSYAEILSGGILRLQVSEAEVNNINIRFLDRRTGEPTVGKTQPETILRHLTTKKGQAYNRAQVKRDVETILTMGIMEDVTIIPQPVGDSNKVDLVMNLVERPSGGFSAGGGISSGITNGPLSGLIGSFAYSHRNVFGRNKKLNLSLERGQIDSIFRLNYTDPWIDGDNKRTSRTIMVQNSRTPGTLIHGGDHPDHGPITIGRVTAGIEYSRPFRPKWSGTLGLIFQHAGARDDKGNPIIRDFYNSQLTASGNAYDDTLLAKLESVYTDSGDRSSTMFVFNIEQGLPILPEWLSFNRVTARLRQGYEIGPARLLLSASGGHVEGNFSPHEAFAIGGTNSVRGYEEGAVGSGRSYAVGSGEVSCRMFGPLEGVVFGDYGSDLSSGPKVPGDPAGARGKPGSGYGYGVGVRVDSPLGPLRLEYAFNDKQARRFHFGVGYRN</sequence>
<keyword id="KW-0150">Chloroplast</keyword>
<keyword id="KW-0472">Membrane</keyword>
<keyword id="KW-0934">Plastid</keyword>
<keyword id="KW-1002">Plastid outer membrane</keyword>
<keyword id="KW-1185">Reference proteome</keyword>
<gene>
    <name type="primary">OEP80</name>
    <name type="synonym">OEP75</name>
    <name type="ordered locus">Os02g0196300</name>
    <name type="ordered locus">LOC_Os02g10260</name>
    <name type="ORF">OJ1225_F07.23</name>
    <name type="ORF">OJ1524_D08.8</name>
    <name type="ORF">OsJ_005573</name>
</gene>
<reference key="1">
    <citation type="journal article" date="2005" name="Nature">
        <title>The map-based sequence of the rice genome.</title>
        <authorList>
            <consortium name="International rice genome sequencing project (IRGSP)"/>
        </authorList>
    </citation>
    <scope>NUCLEOTIDE SEQUENCE [LARGE SCALE GENOMIC DNA]</scope>
    <source>
        <strain>cv. Nipponbare</strain>
    </source>
</reference>
<reference key="2">
    <citation type="journal article" date="2008" name="Nucleic Acids Res.">
        <title>The rice annotation project database (RAP-DB): 2008 update.</title>
        <authorList>
            <consortium name="The rice annotation project (RAP)"/>
        </authorList>
    </citation>
    <scope>GENOME REANNOTATION</scope>
    <source>
        <strain>cv. Nipponbare</strain>
    </source>
</reference>
<reference key="3">
    <citation type="journal article" date="2013" name="Rice">
        <title>Improvement of the Oryza sativa Nipponbare reference genome using next generation sequence and optical map data.</title>
        <authorList>
            <person name="Kawahara Y."/>
            <person name="de la Bastide M."/>
            <person name="Hamilton J.P."/>
            <person name="Kanamori H."/>
            <person name="McCombie W.R."/>
            <person name="Ouyang S."/>
            <person name="Schwartz D.C."/>
            <person name="Tanaka T."/>
            <person name="Wu J."/>
            <person name="Zhou S."/>
            <person name="Childs K.L."/>
            <person name="Davidson R.M."/>
            <person name="Lin H."/>
            <person name="Quesada-Ocampo L."/>
            <person name="Vaillancourt B."/>
            <person name="Sakai H."/>
            <person name="Lee S.S."/>
            <person name="Kim J."/>
            <person name="Numa H."/>
            <person name="Itoh T."/>
            <person name="Buell C.R."/>
            <person name="Matsumoto T."/>
        </authorList>
    </citation>
    <scope>GENOME REANNOTATION</scope>
    <source>
        <strain>cv. Nipponbare</strain>
    </source>
</reference>
<reference key="4">
    <citation type="journal article" date="2005" name="PLoS Biol.">
        <title>The genomes of Oryza sativa: a history of duplications.</title>
        <authorList>
            <person name="Yu J."/>
            <person name="Wang J."/>
            <person name="Lin W."/>
            <person name="Li S."/>
            <person name="Li H."/>
            <person name="Zhou J."/>
            <person name="Ni P."/>
            <person name="Dong W."/>
            <person name="Hu S."/>
            <person name="Zeng C."/>
            <person name="Zhang J."/>
            <person name="Zhang Y."/>
            <person name="Li R."/>
            <person name="Xu Z."/>
            <person name="Li S."/>
            <person name="Li X."/>
            <person name="Zheng H."/>
            <person name="Cong L."/>
            <person name="Lin L."/>
            <person name="Yin J."/>
            <person name="Geng J."/>
            <person name="Li G."/>
            <person name="Shi J."/>
            <person name="Liu J."/>
            <person name="Lv H."/>
            <person name="Li J."/>
            <person name="Wang J."/>
            <person name="Deng Y."/>
            <person name="Ran L."/>
            <person name="Shi X."/>
            <person name="Wang X."/>
            <person name="Wu Q."/>
            <person name="Li C."/>
            <person name="Ren X."/>
            <person name="Wang J."/>
            <person name="Wang X."/>
            <person name="Li D."/>
            <person name="Liu D."/>
            <person name="Zhang X."/>
            <person name="Ji Z."/>
            <person name="Zhao W."/>
            <person name="Sun Y."/>
            <person name="Zhang Z."/>
            <person name="Bao J."/>
            <person name="Han Y."/>
            <person name="Dong L."/>
            <person name="Ji J."/>
            <person name="Chen P."/>
            <person name="Wu S."/>
            <person name="Liu J."/>
            <person name="Xiao Y."/>
            <person name="Bu D."/>
            <person name="Tan J."/>
            <person name="Yang L."/>
            <person name="Ye C."/>
            <person name="Zhang J."/>
            <person name="Xu J."/>
            <person name="Zhou Y."/>
            <person name="Yu Y."/>
            <person name="Zhang B."/>
            <person name="Zhuang S."/>
            <person name="Wei H."/>
            <person name="Liu B."/>
            <person name="Lei M."/>
            <person name="Yu H."/>
            <person name="Li Y."/>
            <person name="Xu H."/>
            <person name="Wei S."/>
            <person name="He X."/>
            <person name="Fang L."/>
            <person name="Zhang Z."/>
            <person name="Zhang Y."/>
            <person name="Huang X."/>
            <person name="Su Z."/>
            <person name="Tong W."/>
            <person name="Li J."/>
            <person name="Tong Z."/>
            <person name="Li S."/>
            <person name="Ye J."/>
            <person name="Wang L."/>
            <person name="Fang L."/>
            <person name="Lei T."/>
            <person name="Chen C.-S."/>
            <person name="Chen H.-C."/>
            <person name="Xu Z."/>
            <person name="Li H."/>
            <person name="Huang H."/>
            <person name="Zhang F."/>
            <person name="Xu H."/>
            <person name="Li N."/>
            <person name="Zhao C."/>
            <person name="Li S."/>
            <person name="Dong L."/>
            <person name="Huang Y."/>
            <person name="Li L."/>
            <person name="Xi Y."/>
            <person name="Qi Q."/>
            <person name="Li W."/>
            <person name="Zhang B."/>
            <person name="Hu W."/>
            <person name="Zhang Y."/>
            <person name="Tian X."/>
            <person name="Jiao Y."/>
            <person name="Liang X."/>
            <person name="Jin J."/>
            <person name="Gao L."/>
            <person name="Zheng W."/>
            <person name="Hao B."/>
            <person name="Liu S.-M."/>
            <person name="Wang W."/>
            <person name="Yuan L."/>
            <person name="Cao M."/>
            <person name="McDermott J."/>
            <person name="Samudrala R."/>
            <person name="Wang J."/>
            <person name="Wong G.K.-S."/>
            <person name="Yang H."/>
        </authorList>
    </citation>
    <scope>NUCLEOTIDE SEQUENCE [LARGE SCALE GENOMIC DNA]</scope>
    <source>
        <strain>cv. Nipponbare</strain>
    </source>
</reference>
<dbReference type="EMBL" id="AP004184">
    <property type="protein sequence ID" value="BAD25259.1"/>
    <property type="status" value="ALT_SEQ"/>
    <property type="molecule type" value="Genomic_DNA"/>
</dbReference>
<dbReference type="EMBL" id="AP004191">
    <property type="protein sequence ID" value="BAD25272.1"/>
    <property type="status" value="ALT_SEQ"/>
    <property type="molecule type" value="Genomic_DNA"/>
</dbReference>
<dbReference type="EMBL" id="AP008208">
    <property type="protein sequence ID" value="BAF08106.1"/>
    <property type="status" value="ALT_SEQ"/>
    <property type="molecule type" value="Genomic_DNA"/>
</dbReference>
<dbReference type="EMBL" id="AP014958">
    <property type="status" value="NOT_ANNOTATED_CDS"/>
    <property type="molecule type" value="Genomic_DNA"/>
</dbReference>
<dbReference type="EMBL" id="CM000139">
    <property type="protein sequence ID" value="EAZ22090.1"/>
    <property type="molecule type" value="Genomic_DNA"/>
</dbReference>
<dbReference type="RefSeq" id="XP_015627644.1">
    <property type="nucleotide sequence ID" value="XM_015772158.1"/>
</dbReference>
<dbReference type="SMR" id="Q6H7M7"/>
<dbReference type="FunCoup" id="Q6H7M7">
    <property type="interactions" value="332"/>
</dbReference>
<dbReference type="STRING" id="39947.Q6H7M7"/>
<dbReference type="PaxDb" id="39947-Q6H7M7"/>
<dbReference type="KEGG" id="dosa:Os02g0196300"/>
<dbReference type="eggNOG" id="ENOG502QSQ3">
    <property type="taxonomic scope" value="Eukaryota"/>
</dbReference>
<dbReference type="HOGENOM" id="CLU_007664_2_1_1"/>
<dbReference type="InParanoid" id="Q6H7M7"/>
<dbReference type="OrthoDB" id="2013615at2759"/>
<dbReference type="Proteomes" id="UP000000763">
    <property type="component" value="Chromosome 2"/>
</dbReference>
<dbReference type="Proteomes" id="UP000007752">
    <property type="component" value="Chromosome 2"/>
</dbReference>
<dbReference type="Proteomes" id="UP000059680">
    <property type="component" value="Chromosome 2"/>
</dbReference>
<dbReference type="GO" id="GO:0009707">
    <property type="term" value="C:chloroplast outer membrane"/>
    <property type="evidence" value="ECO:0007669"/>
    <property type="project" value="UniProtKB-SubCell"/>
</dbReference>
<dbReference type="GO" id="GO:0016020">
    <property type="term" value="C:membrane"/>
    <property type="evidence" value="ECO:0000318"/>
    <property type="project" value="GO_Central"/>
</dbReference>
<dbReference type="GO" id="GO:0009658">
    <property type="term" value="P:chloroplast organization"/>
    <property type="evidence" value="ECO:0000318"/>
    <property type="project" value="GO_Central"/>
</dbReference>
<dbReference type="GO" id="GO:0009793">
    <property type="term" value="P:embryo development ending in seed dormancy"/>
    <property type="evidence" value="ECO:0000318"/>
    <property type="project" value="GO_Central"/>
</dbReference>
<dbReference type="FunFam" id="3.10.20.310:FF:000013">
    <property type="entry name" value="Outer envelope protein 80 chloroplastic"/>
    <property type="match status" value="1"/>
</dbReference>
<dbReference type="FunFam" id="2.40.160.50:FF:000006">
    <property type="entry name" value="Outer envelope protein 80, chloroplastic"/>
    <property type="match status" value="1"/>
</dbReference>
<dbReference type="FunFam" id="3.10.20.310:FF:000012">
    <property type="entry name" value="Outer envelope protein 80, chloroplastic"/>
    <property type="match status" value="1"/>
</dbReference>
<dbReference type="FunFam" id="3.10.20.310:FF:000014">
    <property type="entry name" value="Outer envelope protein 80, chloroplastic"/>
    <property type="match status" value="1"/>
</dbReference>
<dbReference type="Gene3D" id="3.10.20.310">
    <property type="entry name" value="membrane protein fhac"/>
    <property type="match status" value="3"/>
</dbReference>
<dbReference type="Gene3D" id="2.40.160.50">
    <property type="entry name" value="membrane protein fhac: a member of the omp85/tpsb transporter family"/>
    <property type="match status" value="1"/>
</dbReference>
<dbReference type="InterPro" id="IPR000184">
    <property type="entry name" value="Bac_surfAg_D15"/>
</dbReference>
<dbReference type="InterPro" id="IPR010827">
    <property type="entry name" value="BamA/TamA_POTRA"/>
</dbReference>
<dbReference type="InterPro" id="IPR039910">
    <property type="entry name" value="D15-like"/>
</dbReference>
<dbReference type="InterPro" id="IPR034746">
    <property type="entry name" value="POTRA"/>
</dbReference>
<dbReference type="PANTHER" id="PTHR12815:SF32">
    <property type="entry name" value="OUTER ENVELOPE PROTEIN 80, CHLOROPLASTIC"/>
    <property type="match status" value="1"/>
</dbReference>
<dbReference type="PANTHER" id="PTHR12815">
    <property type="entry name" value="SORTING AND ASSEMBLY MACHINERY SAMM50 PROTEIN FAMILY MEMBER"/>
    <property type="match status" value="1"/>
</dbReference>
<dbReference type="Pfam" id="PF01103">
    <property type="entry name" value="Omp85"/>
    <property type="match status" value="1"/>
</dbReference>
<dbReference type="Pfam" id="PF07244">
    <property type="entry name" value="POTRA"/>
    <property type="match status" value="1"/>
</dbReference>
<dbReference type="PROSITE" id="PS51779">
    <property type="entry name" value="POTRA"/>
    <property type="match status" value="1"/>
</dbReference>
<evidence type="ECO:0000250" key="1"/>
<evidence type="ECO:0000255" key="2">
    <source>
        <dbReference type="PROSITE-ProRule" id="PRU01115"/>
    </source>
</evidence>
<evidence type="ECO:0000305" key="3"/>
<feature type="chain" id="PRO_0000352175" description="Outer envelope protein 80, chloroplastic">
    <location>
        <begin position="1"/>
        <end position="665"/>
    </location>
</feature>
<feature type="domain" description="POTRA" evidence="2">
    <location>
        <begin position="246"/>
        <end position="328"/>
    </location>
</feature>
<accession>Q6H7M7</accession>
<accession>A3A451</accession>
<comment type="subcellular location">
    <subcellularLocation>
        <location evidence="1">Plastid</location>
        <location evidence="1">Chloroplast outer membrane</location>
    </subcellularLocation>
</comment>
<comment type="miscellaneous">
    <text evidence="1">Probably not processed upon targeting to chloroplasts.</text>
</comment>
<comment type="similarity">
    <text evidence="3">Belongs to the OEP80 (TC 1.B.33.2) family.</text>
</comment>
<comment type="sequence caution" evidence="3">
    <conflict type="erroneous gene model prediction">
        <sequence resource="EMBL-CDS" id="BAD25259"/>
    </conflict>
</comment>
<comment type="sequence caution" evidence="3">
    <conflict type="erroneous gene model prediction">
        <sequence resource="EMBL-CDS" id="BAD25272"/>
    </conflict>
</comment>
<comment type="sequence caution" evidence="3">
    <conflict type="erroneous gene model prediction">
        <sequence resource="EMBL-CDS" id="BAF08106"/>
    </conflict>
</comment>
<name>OEP80_ORYSJ</name>
<organism>
    <name type="scientific">Oryza sativa subsp. japonica</name>
    <name type="common">Rice</name>
    <dbReference type="NCBI Taxonomy" id="39947"/>
    <lineage>
        <taxon>Eukaryota</taxon>
        <taxon>Viridiplantae</taxon>
        <taxon>Streptophyta</taxon>
        <taxon>Embryophyta</taxon>
        <taxon>Tracheophyta</taxon>
        <taxon>Spermatophyta</taxon>
        <taxon>Magnoliopsida</taxon>
        <taxon>Liliopsida</taxon>
        <taxon>Poales</taxon>
        <taxon>Poaceae</taxon>
        <taxon>BOP clade</taxon>
        <taxon>Oryzoideae</taxon>
        <taxon>Oryzeae</taxon>
        <taxon>Oryzinae</taxon>
        <taxon>Oryza</taxon>
        <taxon>Oryza sativa</taxon>
    </lineage>
</organism>
<proteinExistence type="inferred from homology"/>
<protein>
    <recommendedName>
        <fullName>Outer envelope protein 80, chloroplastic</fullName>
    </recommendedName>
    <alternativeName>
        <fullName>Chloroplastic outer envelope protein of 80 kDa</fullName>
        <shortName>OsOEP80</shortName>
    </alternativeName>
</protein>